<keyword id="KW-0929">Antimicrobial</keyword>
<keyword id="KW-0903">Direct protein sequencing</keyword>
<keyword id="KW-0382">Hypotensive agent</keyword>
<keyword id="KW-0964">Secreted</keyword>
<proteinExistence type="evidence at protein level"/>
<feature type="peptide" id="PRO_0000455696" description="Probable bradykinin-potentiating peptide">
    <location>
        <begin position="1"/>
        <end position="18"/>
    </location>
</feature>
<reference key="1">
    <citation type="journal article" date="2018" name="Toxicon">
        <title>Venom characterization of the Amazonian scorpion Tityus metuendus.</title>
        <authorList>
            <person name="Batista C.V.F."/>
            <person name="Martins J.G."/>
            <person name="Restano-Cassulini R."/>
            <person name="Coronas F.I.V."/>
            <person name="Zamudio F.Z."/>
            <person name="Procopio R."/>
            <person name="Possani L.D."/>
        </authorList>
    </citation>
    <scope>PROTEIN SEQUENCE</scope>
    <scope>MASS SPECTROMETRY</scope>
    <scope>SUBCELLULAR LOCATION</scope>
    <source>
        <tissue>Venom</tissue>
    </source>
</reference>
<organism>
    <name type="scientific">Tityus metuendus</name>
    <name type="common">Scorpion</name>
    <dbReference type="NCBI Taxonomy" id="2203750"/>
    <lineage>
        <taxon>Eukaryota</taxon>
        <taxon>Metazoa</taxon>
        <taxon>Ecdysozoa</taxon>
        <taxon>Arthropoda</taxon>
        <taxon>Chelicerata</taxon>
        <taxon>Arachnida</taxon>
        <taxon>Scorpiones</taxon>
        <taxon>Buthida</taxon>
        <taxon>Buthoidea</taxon>
        <taxon>Buthidae</taxon>
        <taxon>Tityus</taxon>
    </lineage>
</organism>
<sequence length="18" mass="1735">KVLAPAEEAPAEAPAAAE</sequence>
<dbReference type="GO" id="GO:0005576">
    <property type="term" value="C:extracellular region"/>
    <property type="evidence" value="ECO:0007669"/>
    <property type="project" value="UniProtKB-SubCell"/>
</dbReference>
<dbReference type="GO" id="GO:0008217">
    <property type="term" value="P:regulation of blood pressure"/>
    <property type="evidence" value="ECO:0007669"/>
    <property type="project" value="UniProtKB-KW"/>
</dbReference>
<comment type="function">
    <text evidence="1 2">Antimicrobial peptide (By similarity). May also inhibit angiotensin-converting enzyme (ACE) and potentiate bradykinin (BK) (By similarity).</text>
</comment>
<comment type="subcellular location">
    <subcellularLocation>
        <location evidence="3">Secreted</location>
    </subcellularLocation>
</comment>
<comment type="tissue specificity">
    <text evidence="6">Expressed by the venom gland.</text>
</comment>
<comment type="mass spectrometry" mass="1735.0" method="Electrospray" evidence="3">
    <text>Average mass.</text>
</comment>
<comment type="similarity">
    <text evidence="5">Belongs to the non-disulfide-bridged peptide (NDBP) superfamily. Long chain multifunctional peptide (group 2) family.</text>
</comment>
<name>NDB_TITME</name>
<accession>P0DQU4</accession>
<evidence type="ECO:0000250" key="1">
    <source>
        <dbReference type="UniProtKB" id="C9X4J0"/>
    </source>
</evidence>
<evidence type="ECO:0000250" key="2">
    <source>
        <dbReference type="UniProtKB" id="P86407"/>
    </source>
</evidence>
<evidence type="ECO:0000269" key="3">
    <source>
    </source>
</evidence>
<evidence type="ECO:0000303" key="4">
    <source>
    </source>
</evidence>
<evidence type="ECO:0000305" key="5"/>
<evidence type="ECO:0000305" key="6">
    <source>
    </source>
</evidence>
<protein>
    <recommendedName>
        <fullName evidence="4">Probable bradykinin-potentiating peptide</fullName>
        <shortName evidence="5">BPP</shortName>
    </recommendedName>
    <alternativeName>
        <fullName evidence="2">Probable antimicrobial peptide</fullName>
    </alternativeName>
</protein>